<comment type="function">
    <text evidence="3">Binds to muscle nicotinic acetylcholine receptor (nAChR) and inhibit acetylcholine from binding to the receptor, thereby impairing neuromuscular transmission.</text>
</comment>
<comment type="subcellular location">
    <subcellularLocation>
        <location evidence="4">Secreted</location>
    </subcellularLocation>
</comment>
<comment type="tissue specificity">
    <text evidence="5">Expressed by the venom gland.</text>
</comment>
<comment type="similarity">
    <text evidence="5">Belongs to the three-finger toxin family. Short-chain subfamily. Type I alpha-neurotoxin sub-subfamily.</text>
</comment>
<accession>F8J2G5</accession>
<keyword id="KW-0008">Acetylcholine receptor inhibiting toxin</keyword>
<keyword id="KW-1015">Disulfide bond</keyword>
<keyword id="KW-0872">Ion channel impairing toxin</keyword>
<keyword id="KW-0528">Neurotoxin</keyword>
<keyword id="KW-0629">Postsynaptic neurotoxin</keyword>
<keyword id="KW-0964">Secreted</keyword>
<keyword id="KW-0732">Signal</keyword>
<keyword id="KW-0800">Toxin</keyword>
<feature type="signal peptide" evidence="1">
    <location>
        <begin position="1"/>
        <end position="21"/>
    </location>
</feature>
<feature type="chain" id="PRO_0000425520" description="Short neurotoxin 342">
    <location>
        <begin position="22"/>
        <end position="78"/>
    </location>
</feature>
<feature type="disulfide bond" evidence="2">
    <location>
        <begin position="24"/>
        <end position="43"/>
    </location>
</feature>
<feature type="disulfide bond" evidence="2">
    <location>
        <begin position="38"/>
        <end position="57"/>
    </location>
</feature>
<feature type="disulfide bond" evidence="2">
    <location>
        <begin position="59"/>
        <end position="70"/>
    </location>
</feature>
<feature type="disulfide bond" evidence="2">
    <location>
        <begin position="71"/>
        <end position="76"/>
    </location>
</feature>
<protein>
    <recommendedName>
        <fullName>Short neurotoxin 342</fullName>
        <shortName>SNTX-342</shortName>
    </recommendedName>
</protein>
<organism>
    <name type="scientific">Drysdalia coronoides</name>
    <name type="common">White-lipped snake</name>
    <name type="synonym">Hoplocephalus coronoides</name>
    <dbReference type="NCBI Taxonomy" id="66186"/>
    <lineage>
        <taxon>Eukaryota</taxon>
        <taxon>Metazoa</taxon>
        <taxon>Chordata</taxon>
        <taxon>Craniata</taxon>
        <taxon>Vertebrata</taxon>
        <taxon>Euteleostomi</taxon>
        <taxon>Lepidosauria</taxon>
        <taxon>Squamata</taxon>
        <taxon>Bifurcata</taxon>
        <taxon>Unidentata</taxon>
        <taxon>Episquamata</taxon>
        <taxon>Toxicofera</taxon>
        <taxon>Serpentes</taxon>
        <taxon>Colubroidea</taxon>
        <taxon>Elapidae</taxon>
        <taxon>Notechinae</taxon>
        <taxon>Drysdalia</taxon>
    </lineage>
</organism>
<sequence>MKTLLLTLVVLTIVCLDLGYTMTCYNQQLSQPQTTTTCAESFCYKKTWSGTIIERGCGCPPMKPPIRLKCCRTEKCNN</sequence>
<reference key="1">
    <citation type="journal article" date="2011" name="J. Proteome Res.">
        <title>Identification of novel proteins from the venom of a cryptic snake Drysdalia coronoides by a combined transcriptomics and proteomics approach.</title>
        <authorList>
            <person name="Chatrath S.T."/>
            <person name="Chapeaurouge A."/>
            <person name="Lin Q."/>
            <person name="Lim T.K."/>
            <person name="Dunstan N."/>
            <person name="Mirtschin P."/>
            <person name="Kumar P.P."/>
            <person name="Kini R.M."/>
        </authorList>
    </citation>
    <scope>NUCLEOTIDE SEQUENCE [MRNA]</scope>
    <scope>IDENTIFICATION BY MASS SPECTROMETRY</scope>
    <scope>SUBCELLULAR LOCATION</scope>
    <source>
        <tissue>Venom</tissue>
        <tissue>Venom gland</tissue>
    </source>
</reference>
<proteinExistence type="evidence at protein level"/>
<dbReference type="EMBL" id="FJ752483">
    <property type="protein sequence ID" value="ACR78505.1"/>
    <property type="molecule type" value="mRNA"/>
</dbReference>
<dbReference type="SMR" id="F8J2G5"/>
<dbReference type="GO" id="GO:0005576">
    <property type="term" value="C:extracellular region"/>
    <property type="evidence" value="ECO:0007669"/>
    <property type="project" value="UniProtKB-SubCell"/>
</dbReference>
<dbReference type="GO" id="GO:0030550">
    <property type="term" value="F:acetylcholine receptor inhibitor activity"/>
    <property type="evidence" value="ECO:0007669"/>
    <property type="project" value="UniProtKB-KW"/>
</dbReference>
<dbReference type="GO" id="GO:0099106">
    <property type="term" value="F:ion channel regulator activity"/>
    <property type="evidence" value="ECO:0007669"/>
    <property type="project" value="UniProtKB-KW"/>
</dbReference>
<dbReference type="GO" id="GO:0090729">
    <property type="term" value="F:toxin activity"/>
    <property type="evidence" value="ECO:0007669"/>
    <property type="project" value="UniProtKB-KW"/>
</dbReference>
<dbReference type="CDD" id="cd00206">
    <property type="entry name" value="TFP_snake_toxin"/>
    <property type="match status" value="1"/>
</dbReference>
<dbReference type="Gene3D" id="2.10.60.10">
    <property type="entry name" value="CD59"/>
    <property type="match status" value="1"/>
</dbReference>
<dbReference type="InterPro" id="IPR003571">
    <property type="entry name" value="Snake_3FTx"/>
</dbReference>
<dbReference type="InterPro" id="IPR045860">
    <property type="entry name" value="Snake_toxin-like_sf"/>
</dbReference>
<dbReference type="InterPro" id="IPR018354">
    <property type="entry name" value="Snake_toxin_con_site"/>
</dbReference>
<dbReference type="InterPro" id="IPR054131">
    <property type="entry name" value="Toxin_cobra-type"/>
</dbReference>
<dbReference type="Pfam" id="PF21947">
    <property type="entry name" value="Toxin_cobra-type"/>
    <property type="match status" value="1"/>
</dbReference>
<dbReference type="SUPFAM" id="SSF57302">
    <property type="entry name" value="Snake toxin-like"/>
    <property type="match status" value="1"/>
</dbReference>
<dbReference type="PROSITE" id="PS00272">
    <property type="entry name" value="SNAKE_TOXIN"/>
    <property type="match status" value="1"/>
</dbReference>
<evidence type="ECO:0000250" key="1"/>
<evidence type="ECO:0000250" key="2">
    <source>
        <dbReference type="UniProtKB" id="P0C1Z0"/>
    </source>
</evidence>
<evidence type="ECO:0000250" key="3">
    <source>
        <dbReference type="UniProtKB" id="P60775"/>
    </source>
</evidence>
<evidence type="ECO:0000269" key="4">
    <source>
    </source>
</evidence>
<evidence type="ECO:0000305" key="5"/>
<name>3S134_DRYCN</name>